<dbReference type="EC" id="2.7.7.7" evidence="2"/>
<dbReference type="EC" id="4.2.99.-" evidence="2"/>
<dbReference type="EC" id="4.2.99.18" evidence="2"/>
<dbReference type="EMBL" id="AF513911">
    <property type="protein sequence ID" value="AAM49616.1"/>
    <property type="molecule type" value="mRNA"/>
</dbReference>
<dbReference type="EMBL" id="AK077127">
    <property type="protein sequence ID" value="BAC36630.1"/>
    <property type="molecule type" value="mRNA"/>
</dbReference>
<dbReference type="EMBL" id="AK146745">
    <property type="protein sequence ID" value="BAE27405.1"/>
    <property type="molecule type" value="mRNA"/>
</dbReference>
<dbReference type="EMBL" id="AK151436">
    <property type="protein sequence ID" value="BAE30399.1"/>
    <property type="molecule type" value="mRNA"/>
</dbReference>
<dbReference type="EMBL" id="BC006681">
    <property type="protein sequence ID" value="AAH06681.1"/>
    <property type="status" value="ALT_SEQ"/>
    <property type="molecule type" value="mRNA"/>
</dbReference>
<dbReference type="EMBL" id="BC060998">
    <property type="protein sequence ID" value="AAH60998.1"/>
    <property type="molecule type" value="mRNA"/>
</dbReference>
<dbReference type="CCDS" id="CCDS22181.1"/>
<dbReference type="RefSeq" id="NP_035260.1">
    <property type="nucleotide sequence ID" value="NM_011130.2"/>
</dbReference>
<dbReference type="PDB" id="8E10">
    <property type="method" value="X-ray"/>
    <property type="resolution" value="1.65 A"/>
    <property type="chains" value="A/B=88-335"/>
</dbReference>
<dbReference type="PDB" id="8E11">
    <property type="method" value="X-ray"/>
    <property type="resolution" value="1.80 A"/>
    <property type="chains" value="A/B=88-335"/>
</dbReference>
<dbReference type="PDBsum" id="8E10"/>
<dbReference type="PDBsum" id="8E11"/>
<dbReference type="BMRB" id="Q8K409"/>
<dbReference type="SMR" id="Q8K409"/>
<dbReference type="BioGRID" id="202289">
    <property type="interactions" value="8"/>
</dbReference>
<dbReference type="FunCoup" id="Q8K409">
    <property type="interactions" value="1187"/>
</dbReference>
<dbReference type="IntAct" id="Q8K409">
    <property type="interactions" value="1"/>
</dbReference>
<dbReference type="STRING" id="10090.ENSMUSP00000033938"/>
<dbReference type="BindingDB" id="Q8K409"/>
<dbReference type="ChEMBL" id="CHEMBL4565"/>
<dbReference type="iPTMnet" id="Q8K409"/>
<dbReference type="PhosphoSitePlus" id="Q8K409"/>
<dbReference type="PaxDb" id="10090-ENSMUSP00000033938"/>
<dbReference type="PeptideAtlas" id="Q8K409"/>
<dbReference type="ProteomicsDB" id="279807"/>
<dbReference type="Pumba" id="Q8K409"/>
<dbReference type="Antibodypedia" id="3175">
    <property type="antibodies" value="406 antibodies from 35 providers"/>
</dbReference>
<dbReference type="DNASU" id="18970"/>
<dbReference type="Ensembl" id="ENSMUST00000033938.7">
    <property type="protein sequence ID" value="ENSMUSP00000033938.6"/>
    <property type="gene ID" value="ENSMUSG00000031536.7"/>
</dbReference>
<dbReference type="GeneID" id="18970"/>
<dbReference type="KEGG" id="mmu:18970"/>
<dbReference type="UCSC" id="uc009ldk.2">
    <property type="organism name" value="mouse"/>
</dbReference>
<dbReference type="AGR" id="MGI:97740"/>
<dbReference type="CTD" id="5423"/>
<dbReference type="MGI" id="MGI:97740">
    <property type="gene designation" value="Polb"/>
</dbReference>
<dbReference type="VEuPathDB" id="HostDB:ENSMUSG00000031536"/>
<dbReference type="eggNOG" id="KOG2534">
    <property type="taxonomic scope" value="Eukaryota"/>
</dbReference>
<dbReference type="GeneTree" id="ENSGT00940000156918"/>
<dbReference type="HOGENOM" id="CLU_008698_1_0_1"/>
<dbReference type="InParanoid" id="Q8K409"/>
<dbReference type="OMA" id="ERDVFDW"/>
<dbReference type="OrthoDB" id="205514at2759"/>
<dbReference type="PhylomeDB" id="Q8K409"/>
<dbReference type="TreeFam" id="TF103002"/>
<dbReference type="BRENDA" id="4.2.99.B1">
    <property type="organism ID" value="3474"/>
</dbReference>
<dbReference type="Reactome" id="R-MMU-110362">
    <property type="pathway name" value="POLB-Dependent Long Patch Base Excision Repair"/>
</dbReference>
<dbReference type="Reactome" id="R-MMU-110373">
    <property type="pathway name" value="Resolution of AP sites via the multiple-nucleotide patch replacement pathway"/>
</dbReference>
<dbReference type="Reactome" id="R-MMU-110381">
    <property type="pathway name" value="Resolution of AP sites via the single-nucleotide replacement pathway"/>
</dbReference>
<dbReference type="Reactome" id="R-MMU-5649702">
    <property type="pathway name" value="APEX1-Independent Resolution of AP Sites via the Single Nucleotide Replacement Pathway"/>
</dbReference>
<dbReference type="Reactome" id="R-MMU-5651801">
    <property type="pathway name" value="PCNA-Dependent Long Patch Base Excision Repair"/>
</dbReference>
<dbReference type="Reactome" id="R-MMU-5689880">
    <property type="pathway name" value="Ub-specific processing proteases"/>
</dbReference>
<dbReference type="Reactome" id="R-MMU-73930">
    <property type="pathway name" value="Abasic sugar-phosphate removal via the single-nucleotide replacement pathway"/>
</dbReference>
<dbReference type="BioGRID-ORCS" id="18970">
    <property type="hits" value="10 hits in 115 CRISPR screens"/>
</dbReference>
<dbReference type="ChiTaRS" id="Polb">
    <property type="organism name" value="mouse"/>
</dbReference>
<dbReference type="PRO" id="PR:Q8K409"/>
<dbReference type="Proteomes" id="UP000000589">
    <property type="component" value="Chromosome 8"/>
</dbReference>
<dbReference type="RNAct" id="Q8K409">
    <property type="molecule type" value="protein"/>
</dbReference>
<dbReference type="Bgee" id="ENSMUSG00000031536">
    <property type="expression patterns" value="Expressed in spermatid and 274 other cell types or tissues"/>
</dbReference>
<dbReference type="ExpressionAtlas" id="Q8K409">
    <property type="expression patterns" value="baseline and differential"/>
</dbReference>
<dbReference type="GO" id="GO:0005737">
    <property type="term" value="C:cytoplasm"/>
    <property type="evidence" value="ECO:0000250"/>
    <property type="project" value="UniProtKB"/>
</dbReference>
<dbReference type="GO" id="GO:0005874">
    <property type="term" value="C:microtubule"/>
    <property type="evidence" value="ECO:0000266"/>
    <property type="project" value="MGI"/>
</dbReference>
<dbReference type="GO" id="GO:0032991">
    <property type="term" value="C:protein-containing complex"/>
    <property type="evidence" value="ECO:0000266"/>
    <property type="project" value="MGI"/>
</dbReference>
<dbReference type="GO" id="GO:0005876">
    <property type="term" value="C:spindle microtubule"/>
    <property type="evidence" value="ECO:0000266"/>
    <property type="project" value="MGI"/>
</dbReference>
<dbReference type="GO" id="GO:0000795">
    <property type="term" value="C:synaptonemal complex"/>
    <property type="evidence" value="ECO:0000304"/>
    <property type="project" value="MGI"/>
</dbReference>
<dbReference type="GO" id="GO:0051575">
    <property type="term" value="F:5'-deoxyribose-5-phosphate lyase activity"/>
    <property type="evidence" value="ECO:0007669"/>
    <property type="project" value="Ensembl"/>
</dbReference>
<dbReference type="GO" id="GO:0140078">
    <property type="term" value="F:class I DNA-(apurinic or apyrimidinic site) endonuclease activity"/>
    <property type="evidence" value="ECO:0007669"/>
    <property type="project" value="Ensembl"/>
</dbReference>
<dbReference type="GO" id="GO:0003684">
    <property type="term" value="F:damaged DNA binding"/>
    <property type="evidence" value="ECO:0007669"/>
    <property type="project" value="Ensembl"/>
</dbReference>
<dbReference type="GO" id="GO:0003887">
    <property type="term" value="F:DNA-directed DNA polymerase activity"/>
    <property type="evidence" value="ECO:0000250"/>
    <property type="project" value="UniProtKB"/>
</dbReference>
<dbReference type="GO" id="GO:0019899">
    <property type="term" value="F:enzyme binding"/>
    <property type="evidence" value="ECO:0007669"/>
    <property type="project" value="Ensembl"/>
</dbReference>
<dbReference type="GO" id="GO:0016829">
    <property type="term" value="F:lyase activity"/>
    <property type="evidence" value="ECO:0000250"/>
    <property type="project" value="UniProtKB"/>
</dbReference>
<dbReference type="GO" id="GO:0046872">
    <property type="term" value="F:metal ion binding"/>
    <property type="evidence" value="ECO:0007669"/>
    <property type="project" value="UniProtKB-KW"/>
</dbReference>
<dbReference type="GO" id="GO:0008017">
    <property type="term" value="F:microtubule binding"/>
    <property type="evidence" value="ECO:0000266"/>
    <property type="project" value="MGI"/>
</dbReference>
<dbReference type="GO" id="GO:0006915">
    <property type="term" value="P:apoptotic process"/>
    <property type="evidence" value="ECO:0000315"/>
    <property type="project" value="MGI"/>
</dbReference>
<dbReference type="GO" id="GO:0006284">
    <property type="term" value="P:base-excision repair"/>
    <property type="evidence" value="ECO:0000250"/>
    <property type="project" value="UniProtKB"/>
</dbReference>
<dbReference type="GO" id="GO:0006287">
    <property type="term" value="P:base-excision repair, gap-filling"/>
    <property type="evidence" value="ECO:0000315"/>
    <property type="project" value="MGI"/>
</dbReference>
<dbReference type="GO" id="GO:0006974">
    <property type="term" value="P:DNA damage response"/>
    <property type="evidence" value="ECO:0000250"/>
    <property type="project" value="UniProtKB"/>
</dbReference>
<dbReference type="GO" id="GO:0006260">
    <property type="term" value="P:DNA replication"/>
    <property type="evidence" value="ECO:0007669"/>
    <property type="project" value="UniProtKB-KW"/>
</dbReference>
<dbReference type="GO" id="GO:0048872">
    <property type="term" value="P:homeostasis of number of cells"/>
    <property type="evidence" value="ECO:0000315"/>
    <property type="project" value="MGI"/>
</dbReference>
<dbReference type="GO" id="GO:0071707">
    <property type="term" value="P:immunoglobulin heavy chain V-D-J recombination"/>
    <property type="evidence" value="ECO:0000315"/>
    <property type="project" value="MGI"/>
</dbReference>
<dbReference type="GO" id="GO:0001701">
    <property type="term" value="P:in utero embryonic development"/>
    <property type="evidence" value="ECO:0000315"/>
    <property type="project" value="MGI"/>
</dbReference>
<dbReference type="GO" id="GO:0006954">
    <property type="term" value="P:inflammatory response"/>
    <property type="evidence" value="ECO:0000315"/>
    <property type="project" value="MGI"/>
</dbReference>
<dbReference type="GO" id="GO:0008630">
    <property type="term" value="P:intrinsic apoptotic signaling pathway in response to DNA damage"/>
    <property type="evidence" value="ECO:0000315"/>
    <property type="project" value="MGI"/>
</dbReference>
<dbReference type="GO" id="GO:0048535">
    <property type="term" value="P:lymph node development"/>
    <property type="evidence" value="ECO:0000315"/>
    <property type="project" value="MGI"/>
</dbReference>
<dbReference type="GO" id="GO:0051402">
    <property type="term" value="P:neuron apoptotic process"/>
    <property type="evidence" value="ECO:0000316"/>
    <property type="project" value="MGI"/>
</dbReference>
<dbReference type="GO" id="GO:0006290">
    <property type="term" value="P:pyrimidine dimer repair"/>
    <property type="evidence" value="ECO:0007669"/>
    <property type="project" value="Ensembl"/>
</dbReference>
<dbReference type="GO" id="GO:0045471">
    <property type="term" value="P:response to ethanol"/>
    <property type="evidence" value="ECO:0007669"/>
    <property type="project" value="Ensembl"/>
</dbReference>
<dbReference type="GO" id="GO:0010332">
    <property type="term" value="P:response to gamma radiation"/>
    <property type="evidence" value="ECO:0007669"/>
    <property type="project" value="Ensembl"/>
</dbReference>
<dbReference type="GO" id="GO:0055093">
    <property type="term" value="P:response to hyperoxia"/>
    <property type="evidence" value="ECO:0007669"/>
    <property type="project" value="Ensembl"/>
</dbReference>
<dbReference type="GO" id="GO:0007435">
    <property type="term" value="P:salivary gland morphogenesis"/>
    <property type="evidence" value="ECO:0000315"/>
    <property type="project" value="MGI"/>
</dbReference>
<dbReference type="GO" id="GO:0016445">
    <property type="term" value="P:somatic diversification of immunoglobulins"/>
    <property type="evidence" value="ECO:0000315"/>
    <property type="project" value="MGI"/>
</dbReference>
<dbReference type="GO" id="GO:0016446">
    <property type="term" value="P:somatic hypermutation of immunoglobulin genes"/>
    <property type="evidence" value="ECO:0000315"/>
    <property type="project" value="MGI"/>
</dbReference>
<dbReference type="GO" id="GO:0048536">
    <property type="term" value="P:spleen development"/>
    <property type="evidence" value="ECO:0000315"/>
    <property type="project" value="MGI"/>
</dbReference>
<dbReference type="CDD" id="cd00141">
    <property type="entry name" value="NT_POLXc"/>
    <property type="match status" value="1"/>
</dbReference>
<dbReference type="FunFam" id="1.10.150.110:FF:000002">
    <property type="entry name" value="DNA polymerase beta"/>
    <property type="match status" value="1"/>
</dbReference>
<dbReference type="FunFam" id="1.10.150.20:FF:000026">
    <property type="entry name" value="DNA polymerase beta"/>
    <property type="match status" value="1"/>
</dbReference>
<dbReference type="FunFam" id="3.30.210.10:FF:000008">
    <property type="entry name" value="DNA polymerase beta"/>
    <property type="match status" value="1"/>
</dbReference>
<dbReference type="FunFam" id="3.30.460.10:FF:000021">
    <property type="entry name" value="DNA polymerase beta"/>
    <property type="match status" value="1"/>
</dbReference>
<dbReference type="Gene3D" id="1.10.150.20">
    <property type="entry name" value="5' to 3' exonuclease, C-terminal subdomain"/>
    <property type="match status" value="1"/>
</dbReference>
<dbReference type="Gene3D" id="3.30.460.10">
    <property type="entry name" value="Beta Polymerase, domain 2"/>
    <property type="match status" value="1"/>
</dbReference>
<dbReference type="Gene3D" id="1.10.150.110">
    <property type="entry name" value="DNA polymerase beta, N-terminal domain-like"/>
    <property type="match status" value="1"/>
</dbReference>
<dbReference type="Gene3D" id="3.30.210.10">
    <property type="entry name" value="DNA polymerase, thumb domain"/>
    <property type="match status" value="1"/>
</dbReference>
<dbReference type="InterPro" id="IPR002054">
    <property type="entry name" value="DNA-dir_DNA_pol_X"/>
</dbReference>
<dbReference type="InterPro" id="IPR019843">
    <property type="entry name" value="DNA_pol-X_BS"/>
</dbReference>
<dbReference type="InterPro" id="IPR010996">
    <property type="entry name" value="DNA_pol_b-like_N"/>
</dbReference>
<dbReference type="InterPro" id="IPR028207">
    <property type="entry name" value="DNA_pol_B_palm_palm"/>
</dbReference>
<dbReference type="InterPro" id="IPR018944">
    <property type="entry name" value="DNA_pol_lambd_fingers_domain"/>
</dbReference>
<dbReference type="InterPro" id="IPR027421">
    <property type="entry name" value="DNA_pol_lamdba_lyase_dom_sf"/>
</dbReference>
<dbReference type="InterPro" id="IPR037160">
    <property type="entry name" value="DNA_Pol_thumb_sf"/>
</dbReference>
<dbReference type="InterPro" id="IPR022312">
    <property type="entry name" value="DNA_pol_X"/>
</dbReference>
<dbReference type="InterPro" id="IPR002008">
    <property type="entry name" value="DNA_pol_X_beta-like"/>
</dbReference>
<dbReference type="InterPro" id="IPR003583">
    <property type="entry name" value="Hlx-hairpin-Hlx_DNA-bd_motif"/>
</dbReference>
<dbReference type="InterPro" id="IPR043519">
    <property type="entry name" value="NT_sf"/>
</dbReference>
<dbReference type="InterPro" id="IPR029398">
    <property type="entry name" value="PolB_thumb"/>
</dbReference>
<dbReference type="PANTHER" id="PTHR11276:SF42">
    <property type="entry name" value="DNA POLYMERASE BETA"/>
    <property type="match status" value="1"/>
</dbReference>
<dbReference type="PANTHER" id="PTHR11276">
    <property type="entry name" value="DNA POLYMERASE TYPE-X FAMILY MEMBER"/>
    <property type="match status" value="1"/>
</dbReference>
<dbReference type="Pfam" id="PF14792">
    <property type="entry name" value="DNA_pol_B_palm"/>
    <property type="match status" value="1"/>
</dbReference>
<dbReference type="Pfam" id="PF14791">
    <property type="entry name" value="DNA_pol_B_thumb"/>
    <property type="match status" value="1"/>
</dbReference>
<dbReference type="Pfam" id="PF10391">
    <property type="entry name" value="DNA_pol_lambd_f"/>
    <property type="match status" value="1"/>
</dbReference>
<dbReference type="Pfam" id="PF14716">
    <property type="entry name" value="HHH_8"/>
    <property type="match status" value="1"/>
</dbReference>
<dbReference type="PRINTS" id="PR00869">
    <property type="entry name" value="DNAPOLX"/>
</dbReference>
<dbReference type="PRINTS" id="PR00870">
    <property type="entry name" value="DNAPOLXBETA"/>
</dbReference>
<dbReference type="SMART" id="SM00278">
    <property type="entry name" value="HhH1"/>
    <property type="match status" value="2"/>
</dbReference>
<dbReference type="SMART" id="SM00483">
    <property type="entry name" value="POLXc"/>
    <property type="match status" value="1"/>
</dbReference>
<dbReference type="SUPFAM" id="SSF47802">
    <property type="entry name" value="DNA polymerase beta, N-terminal domain-like"/>
    <property type="match status" value="1"/>
</dbReference>
<dbReference type="SUPFAM" id="SSF81301">
    <property type="entry name" value="Nucleotidyltransferase"/>
    <property type="match status" value="1"/>
</dbReference>
<dbReference type="SUPFAM" id="SSF81585">
    <property type="entry name" value="PsbU/PolX domain-like"/>
    <property type="match status" value="1"/>
</dbReference>
<dbReference type="PROSITE" id="PS00522">
    <property type="entry name" value="DNA_POLYMERASE_X"/>
    <property type="match status" value="1"/>
</dbReference>
<gene>
    <name type="primary">Polb</name>
</gene>
<reference evidence="5" key="1">
    <citation type="submission" date="2002-05" db="EMBL/GenBank/DDBJ databases">
        <title>Sequence of mouse DNA polymerase beta.</title>
        <authorList>
            <person name="Poltoratsky V.P."/>
            <person name="Wilson S.H."/>
        </authorList>
    </citation>
    <scope>NUCLEOTIDE SEQUENCE [MRNA]</scope>
    <source>
        <strain evidence="5">129/Ola</strain>
    </source>
</reference>
<reference key="2">
    <citation type="journal article" date="2005" name="Science">
        <title>The transcriptional landscape of the mammalian genome.</title>
        <authorList>
            <person name="Carninci P."/>
            <person name="Kasukawa T."/>
            <person name="Katayama S."/>
            <person name="Gough J."/>
            <person name="Frith M.C."/>
            <person name="Maeda N."/>
            <person name="Oyama R."/>
            <person name="Ravasi T."/>
            <person name="Lenhard B."/>
            <person name="Wells C."/>
            <person name="Kodzius R."/>
            <person name="Shimokawa K."/>
            <person name="Bajic V.B."/>
            <person name="Brenner S.E."/>
            <person name="Batalov S."/>
            <person name="Forrest A.R."/>
            <person name="Zavolan M."/>
            <person name="Davis M.J."/>
            <person name="Wilming L.G."/>
            <person name="Aidinis V."/>
            <person name="Allen J.E."/>
            <person name="Ambesi-Impiombato A."/>
            <person name="Apweiler R."/>
            <person name="Aturaliya R.N."/>
            <person name="Bailey T.L."/>
            <person name="Bansal M."/>
            <person name="Baxter L."/>
            <person name="Beisel K.W."/>
            <person name="Bersano T."/>
            <person name="Bono H."/>
            <person name="Chalk A.M."/>
            <person name="Chiu K.P."/>
            <person name="Choudhary V."/>
            <person name="Christoffels A."/>
            <person name="Clutterbuck D.R."/>
            <person name="Crowe M.L."/>
            <person name="Dalla E."/>
            <person name="Dalrymple B.P."/>
            <person name="de Bono B."/>
            <person name="Della Gatta G."/>
            <person name="di Bernardo D."/>
            <person name="Down T."/>
            <person name="Engstrom P."/>
            <person name="Fagiolini M."/>
            <person name="Faulkner G."/>
            <person name="Fletcher C.F."/>
            <person name="Fukushima T."/>
            <person name="Furuno M."/>
            <person name="Futaki S."/>
            <person name="Gariboldi M."/>
            <person name="Georgii-Hemming P."/>
            <person name="Gingeras T.R."/>
            <person name="Gojobori T."/>
            <person name="Green R.E."/>
            <person name="Gustincich S."/>
            <person name="Harbers M."/>
            <person name="Hayashi Y."/>
            <person name="Hensch T.K."/>
            <person name="Hirokawa N."/>
            <person name="Hill D."/>
            <person name="Huminiecki L."/>
            <person name="Iacono M."/>
            <person name="Ikeo K."/>
            <person name="Iwama A."/>
            <person name="Ishikawa T."/>
            <person name="Jakt M."/>
            <person name="Kanapin A."/>
            <person name="Katoh M."/>
            <person name="Kawasawa Y."/>
            <person name="Kelso J."/>
            <person name="Kitamura H."/>
            <person name="Kitano H."/>
            <person name="Kollias G."/>
            <person name="Krishnan S.P."/>
            <person name="Kruger A."/>
            <person name="Kummerfeld S.K."/>
            <person name="Kurochkin I.V."/>
            <person name="Lareau L.F."/>
            <person name="Lazarevic D."/>
            <person name="Lipovich L."/>
            <person name="Liu J."/>
            <person name="Liuni S."/>
            <person name="McWilliam S."/>
            <person name="Madan Babu M."/>
            <person name="Madera M."/>
            <person name="Marchionni L."/>
            <person name="Matsuda H."/>
            <person name="Matsuzawa S."/>
            <person name="Miki H."/>
            <person name="Mignone F."/>
            <person name="Miyake S."/>
            <person name="Morris K."/>
            <person name="Mottagui-Tabar S."/>
            <person name="Mulder N."/>
            <person name="Nakano N."/>
            <person name="Nakauchi H."/>
            <person name="Ng P."/>
            <person name="Nilsson R."/>
            <person name="Nishiguchi S."/>
            <person name="Nishikawa S."/>
            <person name="Nori F."/>
            <person name="Ohara O."/>
            <person name="Okazaki Y."/>
            <person name="Orlando V."/>
            <person name="Pang K.C."/>
            <person name="Pavan W.J."/>
            <person name="Pavesi G."/>
            <person name="Pesole G."/>
            <person name="Petrovsky N."/>
            <person name="Piazza S."/>
            <person name="Reed J."/>
            <person name="Reid J.F."/>
            <person name="Ring B.Z."/>
            <person name="Ringwald M."/>
            <person name="Rost B."/>
            <person name="Ruan Y."/>
            <person name="Salzberg S.L."/>
            <person name="Sandelin A."/>
            <person name="Schneider C."/>
            <person name="Schoenbach C."/>
            <person name="Sekiguchi K."/>
            <person name="Semple C.A."/>
            <person name="Seno S."/>
            <person name="Sessa L."/>
            <person name="Sheng Y."/>
            <person name="Shibata Y."/>
            <person name="Shimada H."/>
            <person name="Shimada K."/>
            <person name="Silva D."/>
            <person name="Sinclair B."/>
            <person name="Sperling S."/>
            <person name="Stupka E."/>
            <person name="Sugiura K."/>
            <person name="Sultana R."/>
            <person name="Takenaka Y."/>
            <person name="Taki K."/>
            <person name="Tammoja K."/>
            <person name="Tan S.L."/>
            <person name="Tang S."/>
            <person name="Taylor M.S."/>
            <person name="Tegner J."/>
            <person name="Teichmann S.A."/>
            <person name="Ueda H.R."/>
            <person name="van Nimwegen E."/>
            <person name="Verardo R."/>
            <person name="Wei C.L."/>
            <person name="Yagi K."/>
            <person name="Yamanishi H."/>
            <person name="Zabarovsky E."/>
            <person name="Zhu S."/>
            <person name="Zimmer A."/>
            <person name="Hide W."/>
            <person name="Bult C."/>
            <person name="Grimmond S.M."/>
            <person name="Teasdale R.D."/>
            <person name="Liu E.T."/>
            <person name="Brusic V."/>
            <person name="Quackenbush J."/>
            <person name="Wahlestedt C."/>
            <person name="Mattick J.S."/>
            <person name="Hume D.A."/>
            <person name="Kai C."/>
            <person name="Sasaki D."/>
            <person name="Tomaru Y."/>
            <person name="Fukuda S."/>
            <person name="Kanamori-Katayama M."/>
            <person name="Suzuki M."/>
            <person name="Aoki J."/>
            <person name="Arakawa T."/>
            <person name="Iida J."/>
            <person name="Imamura K."/>
            <person name="Itoh M."/>
            <person name="Kato T."/>
            <person name="Kawaji H."/>
            <person name="Kawagashira N."/>
            <person name="Kawashima T."/>
            <person name="Kojima M."/>
            <person name="Kondo S."/>
            <person name="Konno H."/>
            <person name="Nakano K."/>
            <person name="Ninomiya N."/>
            <person name="Nishio T."/>
            <person name="Okada M."/>
            <person name="Plessy C."/>
            <person name="Shibata K."/>
            <person name="Shiraki T."/>
            <person name="Suzuki S."/>
            <person name="Tagami M."/>
            <person name="Waki K."/>
            <person name="Watahiki A."/>
            <person name="Okamura-Oho Y."/>
            <person name="Suzuki H."/>
            <person name="Kawai J."/>
            <person name="Hayashizaki Y."/>
        </authorList>
    </citation>
    <scope>NUCLEOTIDE SEQUENCE [LARGE SCALE MRNA]</scope>
    <source>
        <strain>C57BL/6J</strain>
        <tissue>Amnion</tissue>
        <tissue>Bone marrow</tissue>
        <tissue>Testis</tissue>
    </source>
</reference>
<reference evidence="3" key="3">
    <citation type="journal article" date="2004" name="Genome Res.">
        <title>The status, quality, and expansion of the NIH full-length cDNA project: the Mammalian Gene Collection (MGC).</title>
        <authorList>
            <consortium name="The MGC Project Team"/>
        </authorList>
    </citation>
    <scope>NUCLEOTIDE SEQUENCE [LARGE SCALE MRNA]</scope>
    <source>
        <tissue>Mammary gland</tissue>
        <tissue evidence="4">Testis</tissue>
    </source>
</reference>
<reference key="4">
    <citation type="journal article" date="2010" name="Cell">
        <title>A tissue-specific atlas of mouse protein phosphorylation and expression.</title>
        <authorList>
            <person name="Huttlin E.L."/>
            <person name="Jedrychowski M.P."/>
            <person name="Elias J.E."/>
            <person name="Goswami T."/>
            <person name="Rad R."/>
            <person name="Beausoleil S.A."/>
            <person name="Villen J."/>
            <person name="Haas W."/>
            <person name="Sowa M.E."/>
            <person name="Gygi S.P."/>
        </authorList>
    </citation>
    <scope>IDENTIFICATION BY MASS SPECTROMETRY [LARGE SCALE ANALYSIS]</scope>
    <source>
        <tissue>Spleen</tissue>
        <tissue>Testis</tissue>
    </source>
</reference>
<reference key="5">
    <citation type="journal article" date="2013" name="Mol. Cell">
        <title>SIRT5-mediated lysine desuccinylation impacts diverse metabolic pathways.</title>
        <authorList>
            <person name="Park J."/>
            <person name="Chen Y."/>
            <person name="Tishkoff D.X."/>
            <person name="Peng C."/>
            <person name="Tan M."/>
            <person name="Dai L."/>
            <person name="Xie Z."/>
            <person name="Zhang Y."/>
            <person name="Zwaans B.M."/>
            <person name="Skinner M.E."/>
            <person name="Lombard D.B."/>
            <person name="Zhao Y."/>
        </authorList>
    </citation>
    <scope>ACETYLATION [LARGE SCALE ANALYSIS] AT LYS-72</scope>
    <scope>IDENTIFICATION BY MASS SPECTROMETRY [LARGE SCALE ANALYSIS]</scope>
    <source>
        <tissue>Embryonic fibroblast</tissue>
    </source>
</reference>
<sequence length="335" mass="38288">MSKRKAPQETLNGGITDMLVELANFEKNVSQAIHKYNAYRKAASVIAKYPHKIKSGAEAKKLPGVGTKIAEKIDEFLATGKLRKLEKIRQDDTSSSINFLTRVTGIGPSAARKFVDEGIKTLEDLRKNEDKLNHHQRIGLKYFEDFEKRIPREEMLQMQDIVLNEIKKVDSEYIATVCGSFRRGAESSGDMDVLLTHPNFTSESSKQPKLLHRVVEQLQKVHFITDTLSKGETKFMGVCQLPSEKDGKEYPHRRIDIRLIPKDQYYCGVLYFTGSDIFNKNMRAHALEKGFTINEYTIRPLGVTGVAGEPLPVDSEQDIFDYIQWRYREPKDRSE</sequence>
<accession>Q8K409</accession>
<accession>Q3UAB6</accession>
<accession>Q922Z7</accession>
<protein>
    <recommendedName>
        <fullName evidence="2">DNA polymerase beta</fullName>
        <ecNumber evidence="2">2.7.7.7</ecNumber>
    </recommendedName>
    <alternativeName>
        <fullName evidence="2">5'-deoxyribose-phosphate lyase</fullName>
        <shortName evidence="2">5'-dRP lyase</shortName>
        <ecNumber evidence="2">4.2.99.-</ecNumber>
    </alternativeName>
    <alternativeName>
        <fullName evidence="2">AP lyase</fullName>
        <ecNumber evidence="2">4.2.99.18</ecNumber>
    </alternativeName>
</protein>
<proteinExistence type="evidence at protein level"/>
<comment type="function">
    <text evidence="2">Repair polymerase that plays a key role in base-excision repair. During this process, the damaged base is excised by specific DNA glycosylases, the DNA backbone is nicked at the abasic site by an apurinic/apyrimidic (AP) endonuclease, and POLB removes 5'-deoxyribose-phosphate from the preincised AP site acting as a 5'-deoxyribose-phosphate lyase (5'-dRP lyase); through its DNA polymerase activity, it adds one nucleotide to the 3' end of the arising single-nucleotide gap. Conducts 'gap-filling' DNA synthesis in a stepwise distributive fashion rather than in a processive fashion as for other DNA polymerases. It is also able to cleave sugar-phosphate bonds 3' to an intact AP site, acting as an AP lyase.</text>
</comment>
<comment type="catalytic activity">
    <reaction evidence="2">
        <text>DNA(n) + a 2'-deoxyribonucleoside 5'-triphosphate = DNA(n+1) + diphosphate</text>
        <dbReference type="Rhea" id="RHEA:22508"/>
        <dbReference type="Rhea" id="RHEA-COMP:17339"/>
        <dbReference type="Rhea" id="RHEA-COMP:17340"/>
        <dbReference type="ChEBI" id="CHEBI:33019"/>
        <dbReference type="ChEBI" id="CHEBI:61560"/>
        <dbReference type="ChEBI" id="CHEBI:173112"/>
        <dbReference type="EC" id="2.7.7.7"/>
    </reaction>
</comment>
<comment type="catalytic activity">
    <reaction evidence="2">
        <text>a 5'-end 2'-deoxyribose-2'-deoxyribonucleotide-DNA = (2E,4S)-4-hydroxypenten-2-al-5-phosphate + a 5'-end 5'-phospho-2'-deoxyribonucleoside-DNA + H(+)</text>
        <dbReference type="Rhea" id="RHEA:76255"/>
        <dbReference type="Rhea" id="RHEA-COMP:13180"/>
        <dbReference type="Rhea" id="RHEA-COMP:18657"/>
        <dbReference type="ChEBI" id="CHEBI:15378"/>
        <dbReference type="ChEBI" id="CHEBI:136412"/>
        <dbReference type="ChEBI" id="CHEBI:195194"/>
        <dbReference type="ChEBI" id="CHEBI:195195"/>
    </reaction>
</comment>
<comment type="catalytic activity">
    <reaction evidence="2">
        <text>2'-deoxyribonucleotide-(2'-deoxyribose 5'-phosphate)-2'-deoxyribonucleotide-DNA = a 3'-end 2'-deoxyribonucleotide-(2,3-dehydro-2,3-deoxyribose 5'-phosphate)-DNA + a 5'-end 5'-phospho-2'-deoxyribonucleoside-DNA + H(+)</text>
        <dbReference type="Rhea" id="RHEA:66592"/>
        <dbReference type="Rhea" id="RHEA-COMP:13180"/>
        <dbReference type="Rhea" id="RHEA-COMP:16897"/>
        <dbReference type="Rhea" id="RHEA-COMP:17067"/>
        <dbReference type="ChEBI" id="CHEBI:15378"/>
        <dbReference type="ChEBI" id="CHEBI:136412"/>
        <dbReference type="ChEBI" id="CHEBI:157695"/>
        <dbReference type="ChEBI" id="CHEBI:167181"/>
        <dbReference type="EC" id="4.2.99.18"/>
    </reaction>
</comment>
<comment type="cofactor">
    <cofactor evidence="2">
        <name>Mg(2+)</name>
        <dbReference type="ChEBI" id="CHEBI:18420"/>
    </cofactor>
    <text evidence="2">Binds 2 magnesium ions per subunit.</text>
</comment>
<comment type="subunit">
    <text evidence="2">Monomer (By similarity). Binds single-stranded DNA (ssDNA) (By similarity). Interacts with APEX1, LIG1, LIG3, FEN1, PCNA and XRCC1 (By similarity). Interacts with HUWE1/ARF-BP1, STUB1/CHIP and USP47 (By similarity). Interacts with FAM168A (By similarity).</text>
</comment>
<comment type="subcellular location">
    <subcellularLocation>
        <location evidence="2">Nucleus</location>
    </subcellularLocation>
    <subcellularLocation>
        <location evidence="2">Cytoplasm</location>
    </subcellularLocation>
    <text evidence="2">Cytoplasmic in normal conditions. Translocates to the nucleus following DNA damage.</text>
</comment>
<comment type="domain">
    <text evidence="1">Residues 239-252 form a flexible loop which appears to affect the polymerase fidelity.</text>
</comment>
<comment type="PTM">
    <text evidence="1">Methylation by PRMT6 stimulates the polymerase activity by enhancing DNA binding and processivity.</text>
</comment>
<comment type="PTM">
    <text evidence="1">Ubiquitinated at Lys-41, Lys-61 and Lys-81: monoubiquitinated by HUWE1/ARF-BP1. Monoubiquitinated protein is then the target of STUB1/CHIP, which catalyzes polyubiquitination from monoubiquitin, leading to degradation by the proteasome. USP47 mediates the deubiquitination of monoubiquitinated protein, preventing polyubiquitination by STUB1/CHIP and its subsequent degradation (By similarity).</text>
</comment>
<comment type="similarity">
    <text evidence="3">Belongs to the DNA polymerase type-X family.</text>
</comment>
<comment type="sequence caution" evidence="3">
    <conflict type="frameshift">
        <sequence resource="EMBL-CDS" id="AAH06681"/>
    </conflict>
</comment>
<evidence type="ECO:0000250" key="1"/>
<evidence type="ECO:0000250" key="2">
    <source>
        <dbReference type="UniProtKB" id="P06746"/>
    </source>
</evidence>
<evidence type="ECO:0000305" key="3"/>
<evidence type="ECO:0000312" key="4">
    <source>
        <dbReference type="EMBL" id="AAH60998.1"/>
    </source>
</evidence>
<evidence type="ECO:0000312" key="5">
    <source>
        <dbReference type="EMBL" id="AAM49616.1"/>
    </source>
</evidence>
<evidence type="ECO:0007744" key="6">
    <source>
    </source>
</evidence>
<evidence type="ECO:0007829" key="7">
    <source>
        <dbReference type="PDB" id="8E10"/>
    </source>
</evidence>
<evidence type="ECO:0007829" key="8">
    <source>
        <dbReference type="PDB" id="8E11"/>
    </source>
</evidence>
<keyword id="KW-0002">3D-structure</keyword>
<keyword id="KW-0007">Acetylation</keyword>
<keyword id="KW-0963">Cytoplasm</keyword>
<keyword id="KW-0227">DNA damage</keyword>
<keyword id="KW-0234">DNA repair</keyword>
<keyword id="KW-0235">DNA replication</keyword>
<keyword id="KW-0237">DNA synthesis</keyword>
<keyword id="KW-0238">DNA-binding</keyword>
<keyword id="KW-0239">DNA-directed DNA polymerase</keyword>
<keyword id="KW-1017">Isopeptide bond</keyword>
<keyword id="KW-0456">Lyase</keyword>
<keyword id="KW-0460">Magnesium</keyword>
<keyword id="KW-0479">Metal-binding</keyword>
<keyword id="KW-0488">Methylation</keyword>
<keyword id="KW-0548">Nucleotidyltransferase</keyword>
<keyword id="KW-0539">Nucleus</keyword>
<keyword id="KW-0630">Potassium</keyword>
<keyword id="KW-1185">Reference proteome</keyword>
<keyword id="KW-0915">Sodium</keyword>
<keyword id="KW-0808">Transferase</keyword>
<keyword id="KW-0832">Ubl conjugation</keyword>
<feature type="chain" id="PRO_0000218779" description="DNA polymerase beta">
    <location>
        <begin position="1"/>
        <end position="335"/>
    </location>
</feature>
<feature type="region of interest" description="DNA-binding" evidence="2">
    <location>
        <begin position="183"/>
        <end position="192"/>
    </location>
</feature>
<feature type="active site" description="Nucleophile; Schiff-base intermediate with DNA; for 5'-dRP lyase activity" evidence="2">
    <location>
        <position position="72"/>
    </location>
</feature>
<feature type="binding site" evidence="2">
    <location>
        <position position="60"/>
    </location>
    <ligand>
        <name>K(+)</name>
        <dbReference type="ChEBI" id="CHEBI:29103"/>
        <label>1</label>
    </ligand>
</feature>
<feature type="binding site" evidence="2">
    <location>
        <position position="60"/>
    </location>
    <ligand>
        <name>Na(+)</name>
        <dbReference type="ChEBI" id="CHEBI:29101"/>
        <label>1</label>
    </ligand>
</feature>
<feature type="binding site" evidence="2">
    <location>
        <position position="62"/>
    </location>
    <ligand>
        <name>K(+)</name>
        <dbReference type="ChEBI" id="CHEBI:29103"/>
        <label>1</label>
    </ligand>
</feature>
<feature type="binding site" evidence="2">
    <location>
        <position position="62"/>
    </location>
    <ligand>
        <name>Na(+)</name>
        <dbReference type="ChEBI" id="CHEBI:29101"/>
        <label>1</label>
    </ligand>
</feature>
<feature type="binding site" evidence="2">
    <location>
        <position position="65"/>
    </location>
    <ligand>
        <name>K(+)</name>
        <dbReference type="ChEBI" id="CHEBI:29103"/>
        <label>1</label>
    </ligand>
</feature>
<feature type="binding site" evidence="2">
    <location>
        <position position="65"/>
    </location>
    <ligand>
        <name>Na(+)</name>
        <dbReference type="ChEBI" id="CHEBI:29101"/>
        <label>1</label>
    </ligand>
</feature>
<feature type="binding site" evidence="2">
    <location>
        <position position="101"/>
    </location>
    <ligand>
        <name>K(+)</name>
        <dbReference type="ChEBI" id="CHEBI:29103"/>
        <label>2</label>
    </ligand>
</feature>
<feature type="binding site" evidence="2">
    <location>
        <position position="101"/>
    </location>
    <ligand>
        <name>Na(+)</name>
        <dbReference type="ChEBI" id="CHEBI:29101"/>
        <label>2</label>
    </ligand>
</feature>
<feature type="binding site" evidence="2">
    <location>
        <position position="103"/>
    </location>
    <ligand>
        <name>K(+)</name>
        <dbReference type="ChEBI" id="CHEBI:29103"/>
        <label>2</label>
    </ligand>
</feature>
<feature type="binding site" evidence="2">
    <location>
        <position position="103"/>
    </location>
    <ligand>
        <name>Na(+)</name>
        <dbReference type="ChEBI" id="CHEBI:29101"/>
        <label>2</label>
    </ligand>
</feature>
<feature type="binding site" evidence="2">
    <location>
        <position position="106"/>
    </location>
    <ligand>
        <name>K(+)</name>
        <dbReference type="ChEBI" id="CHEBI:29103"/>
        <label>2</label>
    </ligand>
</feature>
<feature type="binding site" evidence="2">
    <location>
        <position position="106"/>
    </location>
    <ligand>
        <name>Na(+)</name>
        <dbReference type="ChEBI" id="CHEBI:29101"/>
        <label>2</label>
    </ligand>
</feature>
<feature type="binding site" evidence="2">
    <location>
        <position position="149"/>
    </location>
    <ligand>
        <name>a 2'-deoxyribonucleoside 5'-triphosphate</name>
        <dbReference type="ChEBI" id="CHEBI:61560"/>
    </ligand>
</feature>
<feature type="binding site" evidence="2">
    <location>
        <position position="180"/>
    </location>
    <ligand>
        <name>a 2'-deoxyribonucleoside 5'-triphosphate</name>
        <dbReference type="ChEBI" id="CHEBI:61560"/>
    </ligand>
</feature>
<feature type="binding site" evidence="2">
    <location>
        <position position="183"/>
    </location>
    <ligand>
        <name>a 2'-deoxyribonucleoside 5'-triphosphate</name>
        <dbReference type="ChEBI" id="CHEBI:61560"/>
    </ligand>
</feature>
<feature type="binding site" evidence="2">
    <location>
        <position position="189"/>
    </location>
    <ligand>
        <name>a 2'-deoxyribonucleoside 5'-triphosphate</name>
        <dbReference type="ChEBI" id="CHEBI:61560"/>
    </ligand>
</feature>
<feature type="binding site" evidence="2">
    <location>
        <position position="190"/>
    </location>
    <ligand>
        <name>a 2'-deoxyribonucleoside 5'-triphosphate</name>
        <dbReference type="ChEBI" id="CHEBI:61560"/>
    </ligand>
</feature>
<feature type="binding site" evidence="2">
    <location>
        <position position="190"/>
    </location>
    <ligand>
        <name>Mg(2+)</name>
        <dbReference type="ChEBI" id="CHEBI:18420"/>
        <label>1</label>
    </ligand>
</feature>
<feature type="binding site" evidence="2">
    <location>
        <position position="190"/>
    </location>
    <ligand>
        <name>Mg(2+)</name>
        <dbReference type="ChEBI" id="CHEBI:18420"/>
        <label>2</label>
    </ligand>
</feature>
<feature type="binding site" evidence="2">
    <location>
        <position position="192"/>
    </location>
    <ligand>
        <name>Mg(2+)</name>
        <dbReference type="ChEBI" id="CHEBI:18420"/>
        <label>1</label>
    </ligand>
</feature>
<feature type="binding site" evidence="2">
    <location>
        <position position="192"/>
    </location>
    <ligand>
        <name>Mg(2+)</name>
        <dbReference type="ChEBI" id="CHEBI:18420"/>
        <label>2</label>
    </ligand>
</feature>
<feature type="binding site" evidence="2">
    <location>
        <position position="256"/>
    </location>
    <ligand>
        <name>Mg(2+)</name>
        <dbReference type="ChEBI" id="CHEBI:18420"/>
        <label>2</label>
    </ligand>
</feature>
<feature type="modified residue" description="N6-acetyllysine" evidence="6">
    <location>
        <position position="72"/>
    </location>
</feature>
<feature type="modified residue" description="Omega-N-methylarginine; by PRMT6" evidence="2">
    <location>
        <position position="83"/>
    </location>
</feature>
<feature type="modified residue" description="Omega-N-methylarginine; by PRMT6" evidence="2">
    <location>
        <position position="152"/>
    </location>
</feature>
<feature type="cross-link" description="Glycyl lysine isopeptide (Lys-Gly) (interchain with G-Cter in ubiquitin)" evidence="2">
    <location>
        <position position="41"/>
    </location>
</feature>
<feature type="cross-link" description="Glycyl lysine isopeptide (Lys-Gly) (interchain with G-Cter in ubiquitin)" evidence="2">
    <location>
        <position position="61"/>
    </location>
</feature>
<feature type="cross-link" description="Glycyl lysine isopeptide (Lys-Gly) (interchain with G-Cter in ubiquitin)" evidence="2">
    <location>
        <position position="81"/>
    </location>
</feature>
<feature type="helix" evidence="7">
    <location>
        <begin position="91"/>
        <end position="101"/>
    </location>
</feature>
<feature type="helix" evidence="7">
    <location>
        <begin position="108"/>
        <end position="116"/>
    </location>
</feature>
<feature type="helix" evidence="7">
    <location>
        <begin position="122"/>
        <end position="126"/>
    </location>
</feature>
<feature type="helix" evidence="7">
    <location>
        <begin position="127"/>
        <end position="131"/>
    </location>
</feature>
<feature type="helix" evidence="7">
    <location>
        <begin position="134"/>
        <end position="141"/>
    </location>
</feature>
<feature type="turn" evidence="7">
    <location>
        <begin position="142"/>
        <end position="144"/>
    </location>
</feature>
<feature type="helix" evidence="7">
    <location>
        <begin position="145"/>
        <end position="147"/>
    </location>
</feature>
<feature type="helix" evidence="7">
    <location>
        <begin position="152"/>
        <end position="169"/>
    </location>
</feature>
<feature type="strand" evidence="7">
    <location>
        <begin position="174"/>
        <end position="177"/>
    </location>
</feature>
<feature type="helix" evidence="7">
    <location>
        <begin position="179"/>
        <end position="182"/>
    </location>
</feature>
<feature type="strand" evidence="7">
    <location>
        <begin position="186"/>
        <end position="196"/>
    </location>
</feature>
<feature type="strand" evidence="8">
    <location>
        <begin position="202"/>
        <end position="204"/>
    </location>
</feature>
<feature type="helix" evidence="7">
    <location>
        <begin position="208"/>
        <end position="220"/>
    </location>
</feature>
<feature type="strand" evidence="7">
    <location>
        <begin position="224"/>
        <end position="230"/>
    </location>
</feature>
<feature type="strand" evidence="7">
    <location>
        <begin position="232"/>
        <end position="239"/>
    </location>
</feature>
<feature type="strand" evidence="7">
    <location>
        <begin position="253"/>
        <end position="259"/>
    </location>
</feature>
<feature type="helix" evidence="7">
    <location>
        <begin position="262"/>
        <end position="264"/>
    </location>
</feature>
<feature type="helix" evidence="7">
    <location>
        <begin position="265"/>
        <end position="273"/>
    </location>
</feature>
<feature type="helix" evidence="7">
    <location>
        <begin position="276"/>
        <end position="288"/>
    </location>
</feature>
<feature type="strand" evidence="7">
    <location>
        <begin position="291"/>
        <end position="293"/>
    </location>
</feature>
<feature type="strand" evidence="7">
    <location>
        <begin position="298"/>
        <end position="301"/>
    </location>
</feature>
<feature type="helix" evidence="7">
    <location>
        <begin position="316"/>
        <end position="322"/>
    </location>
</feature>
<feature type="helix" evidence="7">
    <location>
        <begin position="330"/>
        <end position="332"/>
    </location>
</feature>
<organism evidence="5">
    <name type="scientific">Mus musculus</name>
    <name type="common">Mouse</name>
    <dbReference type="NCBI Taxonomy" id="10090"/>
    <lineage>
        <taxon>Eukaryota</taxon>
        <taxon>Metazoa</taxon>
        <taxon>Chordata</taxon>
        <taxon>Craniata</taxon>
        <taxon>Vertebrata</taxon>
        <taxon>Euteleostomi</taxon>
        <taxon>Mammalia</taxon>
        <taxon>Eutheria</taxon>
        <taxon>Euarchontoglires</taxon>
        <taxon>Glires</taxon>
        <taxon>Rodentia</taxon>
        <taxon>Myomorpha</taxon>
        <taxon>Muroidea</taxon>
        <taxon>Muridae</taxon>
        <taxon>Murinae</taxon>
        <taxon>Mus</taxon>
        <taxon>Mus</taxon>
    </lineage>
</organism>
<name>DPOLB_MOUSE</name>